<protein>
    <recommendedName>
        <fullName>Claudin-20</fullName>
    </recommendedName>
</protein>
<comment type="function">
    <text evidence="1">Plays a major role in tight junction-specific obliteration of the intercellular space, through calcium-independent cell-adhesion activity.</text>
</comment>
<comment type="interaction">
    <interactant intactId="EBI-23801559">
        <id>P56880</id>
    </interactant>
    <interactant intactId="EBI-12109402">
        <id>Q86W74-2</id>
        <label>ANKRD46</label>
    </interactant>
    <organismsDiffer>false</organismsDiffer>
    <experiments>3</experiments>
</comment>
<comment type="interaction">
    <interactant intactId="EBI-23801559">
        <id>P56880</id>
    </interactant>
    <interactant intactId="EBI-12208021">
        <id>Q8TBE1</id>
        <label>CNIH3</label>
    </interactant>
    <organismsDiffer>false</organismsDiffer>
    <experiments>3</experiments>
</comment>
<comment type="interaction">
    <interactant intactId="EBI-23801559">
        <id>P56880</id>
    </interactant>
    <interactant intactId="EBI-720480">
        <id>P24593</id>
        <label>IGFBP5</label>
    </interactant>
    <organismsDiffer>false</organismsDiffer>
    <experiments>3</experiments>
</comment>
<comment type="interaction">
    <interactant intactId="EBI-23801559">
        <id>P56880</id>
    </interactant>
    <interactant intactId="EBI-3932027">
        <id>P21145</id>
        <label>MAL</label>
    </interactant>
    <organismsDiffer>false</organismsDiffer>
    <experiments>3</experiments>
</comment>
<comment type="interaction">
    <interactant intactId="EBI-23801559">
        <id>P56880</id>
    </interactant>
    <interactant intactId="EBI-12188331">
        <id>P60201-2</id>
        <label>PLP1</label>
    </interactant>
    <organismsDiffer>false</organismsDiffer>
    <experiments>3</experiments>
</comment>
<comment type="interaction">
    <interactant intactId="EBI-23801559">
        <id>P56880</id>
    </interactant>
    <interactant intactId="EBI-11528917">
        <id>Q8WW34-2</id>
        <label>TMEM239</label>
    </interactant>
    <organismsDiffer>false</organismsDiffer>
    <experiments>3</experiments>
</comment>
<comment type="subcellular location">
    <subcellularLocation>
        <location evidence="4">Cell junction</location>
        <location evidence="4">Tight junction</location>
    </subcellularLocation>
    <subcellularLocation>
        <location>Cell membrane</location>
        <topology>Multi-pass membrane protein</topology>
    </subcellularLocation>
</comment>
<comment type="similarity">
    <text evidence="5">Belongs to the claudin family.</text>
</comment>
<name>CLD20_HUMAN</name>
<organism>
    <name type="scientific">Homo sapiens</name>
    <name type="common">Human</name>
    <dbReference type="NCBI Taxonomy" id="9606"/>
    <lineage>
        <taxon>Eukaryota</taxon>
        <taxon>Metazoa</taxon>
        <taxon>Chordata</taxon>
        <taxon>Craniata</taxon>
        <taxon>Vertebrata</taxon>
        <taxon>Euteleostomi</taxon>
        <taxon>Mammalia</taxon>
        <taxon>Eutheria</taxon>
        <taxon>Euarchontoglires</taxon>
        <taxon>Primates</taxon>
        <taxon>Haplorrhini</taxon>
        <taxon>Catarrhini</taxon>
        <taxon>Hominidae</taxon>
        <taxon>Homo</taxon>
    </lineage>
</organism>
<feature type="chain" id="PRO_0000144784" description="Claudin-20">
    <location>
        <begin position="1"/>
        <end position="219"/>
    </location>
</feature>
<feature type="topological domain" description="Cytoplasmic" evidence="2">
    <location>
        <begin position="1"/>
        <end position="7"/>
    </location>
</feature>
<feature type="transmembrane region" description="Helical" evidence="2">
    <location>
        <begin position="8"/>
        <end position="28"/>
    </location>
</feature>
<feature type="topological domain" description="Extracellular" evidence="2">
    <location>
        <begin position="29"/>
        <end position="81"/>
    </location>
</feature>
<feature type="transmembrane region" description="Helical" evidence="2">
    <location>
        <begin position="82"/>
        <end position="102"/>
    </location>
</feature>
<feature type="topological domain" description="Cytoplasmic" evidence="2">
    <location>
        <begin position="103"/>
        <end position="118"/>
    </location>
</feature>
<feature type="transmembrane region" description="Helical" evidence="2">
    <location>
        <begin position="119"/>
        <end position="139"/>
    </location>
</feature>
<feature type="topological domain" description="Extracellular" evidence="2">
    <location>
        <begin position="140"/>
        <end position="160"/>
    </location>
</feature>
<feature type="transmembrane region" description="Helical" evidence="2">
    <location>
        <begin position="161"/>
        <end position="181"/>
    </location>
</feature>
<feature type="topological domain" description="Cytoplasmic" evidence="2">
    <location>
        <begin position="182"/>
        <end position="219"/>
    </location>
</feature>
<feature type="region of interest" description="Disordered" evidence="3">
    <location>
        <begin position="193"/>
        <end position="219"/>
    </location>
</feature>
<feature type="compositionally biased region" description="Polar residues" evidence="3">
    <location>
        <begin position="200"/>
        <end position="213"/>
    </location>
</feature>
<keyword id="KW-0965">Cell junction</keyword>
<keyword id="KW-1003">Cell membrane</keyword>
<keyword id="KW-0472">Membrane</keyword>
<keyword id="KW-1185">Reference proteome</keyword>
<keyword id="KW-0796">Tight junction</keyword>
<keyword id="KW-0812">Transmembrane</keyword>
<keyword id="KW-1133">Transmembrane helix</keyword>
<dbReference type="EMBL" id="AL139101">
    <property type="status" value="NOT_ANNOTATED_CDS"/>
    <property type="molecule type" value="Genomic_DNA"/>
</dbReference>
<dbReference type="EMBL" id="BC020838">
    <property type="protein sequence ID" value="AAH20838.1"/>
    <property type="molecule type" value="mRNA"/>
</dbReference>
<dbReference type="CCDS" id="CCDS5249.1"/>
<dbReference type="RefSeq" id="NP_001001346.1">
    <property type="nucleotide sequence ID" value="NM_001001346.3"/>
</dbReference>
<dbReference type="RefSeq" id="XP_011534150.1">
    <property type="nucleotide sequence ID" value="XM_011535848.2"/>
</dbReference>
<dbReference type="SMR" id="P56880"/>
<dbReference type="BioGRID" id="119070">
    <property type="interactions" value="10"/>
</dbReference>
<dbReference type="FunCoup" id="P56880">
    <property type="interactions" value="353"/>
</dbReference>
<dbReference type="IntAct" id="P56880">
    <property type="interactions" value="10"/>
</dbReference>
<dbReference type="STRING" id="9606.ENSP00000356133"/>
<dbReference type="BioMuta" id="CLDN20"/>
<dbReference type="DMDM" id="7387580"/>
<dbReference type="PaxDb" id="9606-ENSP00000356133"/>
<dbReference type="Antibodypedia" id="33420">
    <property type="antibodies" value="91 antibodies from 19 providers"/>
</dbReference>
<dbReference type="DNASU" id="49861"/>
<dbReference type="Ensembl" id="ENST00000367165.3">
    <property type="protein sequence ID" value="ENSP00000356133.3"/>
    <property type="gene ID" value="ENSG00000171217.5"/>
</dbReference>
<dbReference type="GeneID" id="49861"/>
<dbReference type="KEGG" id="hsa:49861"/>
<dbReference type="MANE-Select" id="ENST00000367165.3">
    <property type="protein sequence ID" value="ENSP00000356133.3"/>
    <property type="RefSeq nucleotide sequence ID" value="NM_001001346.3"/>
    <property type="RefSeq protein sequence ID" value="NP_001001346.1"/>
</dbReference>
<dbReference type="UCSC" id="uc003qql.2">
    <property type="organism name" value="human"/>
</dbReference>
<dbReference type="AGR" id="HGNC:2042"/>
<dbReference type="CTD" id="49861"/>
<dbReference type="DisGeNET" id="49861"/>
<dbReference type="GeneCards" id="CLDN20"/>
<dbReference type="HGNC" id="HGNC:2042">
    <property type="gene designation" value="CLDN20"/>
</dbReference>
<dbReference type="HPA" id="ENSG00000171217">
    <property type="expression patterns" value="Low tissue specificity"/>
</dbReference>
<dbReference type="neXtProt" id="NX_P56880"/>
<dbReference type="OpenTargets" id="ENSG00000171217"/>
<dbReference type="PharmGKB" id="PA26568"/>
<dbReference type="VEuPathDB" id="HostDB:ENSG00000171217"/>
<dbReference type="eggNOG" id="ENOG502QYUE">
    <property type="taxonomic scope" value="Eukaryota"/>
</dbReference>
<dbReference type="GeneTree" id="ENSGT00940000161252"/>
<dbReference type="HOGENOM" id="CLU_076370_1_1_1"/>
<dbReference type="InParanoid" id="P56880"/>
<dbReference type="OMA" id="GMKCTHL"/>
<dbReference type="OrthoDB" id="9827234at2759"/>
<dbReference type="PAN-GO" id="P56880">
    <property type="GO annotations" value="4 GO annotations based on evolutionary models"/>
</dbReference>
<dbReference type="PhylomeDB" id="P56880"/>
<dbReference type="TreeFam" id="TF331936"/>
<dbReference type="PathwayCommons" id="P56880"/>
<dbReference type="Reactome" id="R-HSA-420029">
    <property type="pathway name" value="Tight junction interactions"/>
</dbReference>
<dbReference type="SignaLink" id="P56880"/>
<dbReference type="BioGRID-ORCS" id="49861">
    <property type="hits" value="11 hits in 1131 CRISPR screens"/>
</dbReference>
<dbReference type="GeneWiki" id="CLDN20"/>
<dbReference type="GenomeRNAi" id="49861"/>
<dbReference type="Pharos" id="P56880">
    <property type="development level" value="Tdark"/>
</dbReference>
<dbReference type="PRO" id="PR:P56880"/>
<dbReference type="Proteomes" id="UP000005640">
    <property type="component" value="Chromosome 6"/>
</dbReference>
<dbReference type="RNAct" id="P56880">
    <property type="molecule type" value="protein"/>
</dbReference>
<dbReference type="Bgee" id="ENSG00000171217">
    <property type="expression patterns" value="Expressed in buccal mucosa cell and 99 other cell types or tissues"/>
</dbReference>
<dbReference type="ExpressionAtlas" id="P56880">
    <property type="expression patterns" value="baseline and differential"/>
</dbReference>
<dbReference type="GO" id="GO:0005923">
    <property type="term" value="C:bicellular tight junction"/>
    <property type="evidence" value="ECO:0000250"/>
    <property type="project" value="UniProtKB"/>
</dbReference>
<dbReference type="GO" id="GO:0005829">
    <property type="term" value="C:cytosol"/>
    <property type="evidence" value="ECO:0000314"/>
    <property type="project" value="HPA"/>
</dbReference>
<dbReference type="GO" id="GO:0005794">
    <property type="term" value="C:Golgi apparatus"/>
    <property type="evidence" value="ECO:0000314"/>
    <property type="project" value="HPA"/>
</dbReference>
<dbReference type="GO" id="GO:0005886">
    <property type="term" value="C:plasma membrane"/>
    <property type="evidence" value="ECO:0000314"/>
    <property type="project" value="HPA"/>
</dbReference>
<dbReference type="GO" id="GO:0070160">
    <property type="term" value="C:tight junction"/>
    <property type="evidence" value="ECO:0000314"/>
    <property type="project" value="ARUK-UCL"/>
</dbReference>
<dbReference type="GO" id="GO:0042802">
    <property type="term" value="F:identical protein binding"/>
    <property type="evidence" value="ECO:0000250"/>
    <property type="project" value="UniProtKB"/>
</dbReference>
<dbReference type="GO" id="GO:0005198">
    <property type="term" value="F:structural molecule activity"/>
    <property type="evidence" value="ECO:0007669"/>
    <property type="project" value="InterPro"/>
</dbReference>
<dbReference type="GO" id="GO:0070830">
    <property type="term" value="P:bicellular tight junction assembly"/>
    <property type="evidence" value="ECO:0000318"/>
    <property type="project" value="GO_Central"/>
</dbReference>
<dbReference type="GO" id="GO:0016338">
    <property type="term" value="P:calcium-independent cell-cell adhesion via plasma membrane cell-adhesion molecules"/>
    <property type="evidence" value="ECO:0000250"/>
    <property type="project" value="UniProtKB"/>
</dbReference>
<dbReference type="GO" id="GO:0007155">
    <property type="term" value="P:cell adhesion"/>
    <property type="evidence" value="ECO:0000318"/>
    <property type="project" value="GO_Central"/>
</dbReference>
<dbReference type="FunFam" id="1.20.140.150:FF:000001">
    <property type="entry name" value="Claudin"/>
    <property type="match status" value="1"/>
</dbReference>
<dbReference type="Gene3D" id="1.20.140.150">
    <property type="match status" value="1"/>
</dbReference>
<dbReference type="InterPro" id="IPR006187">
    <property type="entry name" value="Claudin"/>
</dbReference>
<dbReference type="InterPro" id="IPR017974">
    <property type="entry name" value="Claudin_CS"/>
</dbReference>
<dbReference type="InterPro" id="IPR004031">
    <property type="entry name" value="PMP22/EMP/MP20/Claudin"/>
</dbReference>
<dbReference type="PANTHER" id="PTHR12002">
    <property type="entry name" value="CLAUDIN"/>
    <property type="match status" value="1"/>
</dbReference>
<dbReference type="Pfam" id="PF00822">
    <property type="entry name" value="PMP22_Claudin"/>
    <property type="match status" value="1"/>
</dbReference>
<dbReference type="PRINTS" id="PR01077">
    <property type="entry name" value="CLAUDIN"/>
</dbReference>
<dbReference type="PROSITE" id="PS01346">
    <property type="entry name" value="CLAUDIN"/>
    <property type="match status" value="1"/>
</dbReference>
<accession>P56880</accession>
<reference key="1">
    <citation type="journal article" date="2003" name="Nature">
        <title>The DNA sequence and analysis of human chromosome 6.</title>
        <authorList>
            <person name="Mungall A.J."/>
            <person name="Palmer S.A."/>
            <person name="Sims S.K."/>
            <person name="Edwards C.A."/>
            <person name="Ashurst J.L."/>
            <person name="Wilming L."/>
            <person name="Jones M.C."/>
            <person name="Horton R."/>
            <person name="Hunt S.E."/>
            <person name="Scott C.E."/>
            <person name="Gilbert J.G.R."/>
            <person name="Clamp M.E."/>
            <person name="Bethel G."/>
            <person name="Milne S."/>
            <person name="Ainscough R."/>
            <person name="Almeida J.P."/>
            <person name="Ambrose K.D."/>
            <person name="Andrews T.D."/>
            <person name="Ashwell R.I.S."/>
            <person name="Babbage A.K."/>
            <person name="Bagguley C.L."/>
            <person name="Bailey J."/>
            <person name="Banerjee R."/>
            <person name="Barker D.J."/>
            <person name="Barlow K.F."/>
            <person name="Bates K."/>
            <person name="Beare D.M."/>
            <person name="Beasley H."/>
            <person name="Beasley O."/>
            <person name="Bird C.P."/>
            <person name="Blakey S.E."/>
            <person name="Bray-Allen S."/>
            <person name="Brook J."/>
            <person name="Brown A.J."/>
            <person name="Brown J.Y."/>
            <person name="Burford D.C."/>
            <person name="Burrill W."/>
            <person name="Burton J."/>
            <person name="Carder C."/>
            <person name="Carter N.P."/>
            <person name="Chapman J.C."/>
            <person name="Clark S.Y."/>
            <person name="Clark G."/>
            <person name="Clee C.M."/>
            <person name="Clegg S."/>
            <person name="Cobley V."/>
            <person name="Collier R.E."/>
            <person name="Collins J.E."/>
            <person name="Colman L.K."/>
            <person name="Corby N.R."/>
            <person name="Coville G.J."/>
            <person name="Culley K.M."/>
            <person name="Dhami P."/>
            <person name="Davies J."/>
            <person name="Dunn M."/>
            <person name="Earthrowl M.E."/>
            <person name="Ellington A.E."/>
            <person name="Evans K.A."/>
            <person name="Faulkner L."/>
            <person name="Francis M.D."/>
            <person name="Frankish A."/>
            <person name="Frankland J."/>
            <person name="French L."/>
            <person name="Garner P."/>
            <person name="Garnett J."/>
            <person name="Ghori M.J."/>
            <person name="Gilby L.M."/>
            <person name="Gillson C.J."/>
            <person name="Glithero R.J."/>
            <person name="Grafham D.V."/>
            <person name="Grant M."/>
            <person name="Gribble S."/>
            <person name="Griffiths C."/>
            <person name="Griffiths M.N.D."/>
            <person name="Hall R."/>
            <person name="Halls K.S."/>
            <person name="Hammond S."/>
            <person name="Harley J.L."/>
            <person name="Hart E.A."/>
            <person name="Heath P.D."/>
            <person name="Heathcott R."/>
            <person name="Holmes S.J."/>
            <person name="Howden P.J."/>
            <person name="Howe K.L."/>
            <person name="Howell G.R."/>
            <person name="Huckle E."/>
            <person name="Humphray S.J."/>
            <person name="Humphries M.D."/>
            <person name="Hunt A.R."/>
            <person name="Johnson C.M."/>
            <person name="Joy A.A."/>
            <person name="Kay M."/>
            <person name="Keenan S.J."/>
            <person name="Kimberley A.M."/>
            <person name="King A."/>
            <person name="Laird G.K."/>
            <person name="Langford C."/>
            <person name="Lawlor S."/>
            <person name="Leongamornlert D.A."/>
            <person name="Leversha M."/>
            <person name="Lloyd C.R."/>
            <person name="Lloyd D.M."/>
            <person name="Loveland J.E."/>
            <person name="Lovell J."/>
            <person name="Martin S."/>
            <person name="Mashreghi-Mohammadi M."/>
            <person name="Maslen G.L."/>
            <person name="Matthews L."/>
            <person name="McCann O.T."/>
            <person name="McLaren S.J."/>
            <person name="McLay K."/>
            <person name="McMurray A."/>
            <person name="Moore M.J.F."/>
            <person name="Mullikin J.C."/>
            <person name="Niblett D."/>
            <person name="Nickerson T."/>
            <person name="Novik K.L."/>
            <person name="Oliver K."/>
            <person name="Overton-Larty E.K."/>
            <person name="Parker A."/>
            <person name="Patel R."/>
            <person name="Pearce A.V."/>
            <person name="Peck A.I."/>
            <person name="Phillimore B.J.C.T."/>
            <person name="Phillips S."/>
            <person name="Plumb R.W."/>
            <person name="Porter K.M."/>
            <person name="Ramsey Y."/>
            <person name="Ranby S.A."/>
            <person name="Rice C.M."/>
            <person name="Ross M.T."/>
            <person name="Searle S.M."/>
            <person name="Sehra H.K."/>
            <person name="Sheridan E."/>
            <person name="Skuce C.D."/>
            <person name="Smith S."/>
            <person name="Smith M."/>
            <person name="Spraggon L."/>
            <person name="Squares S.L."/>
            <person name="Steward C.A."/>
            <person name="Sycamore N."/>
            <person name="Tamlyn-Hall G."/>
            <person name="Tester J."/>
            <person name="Theaker A.J."/>
            <person name="Thomas D.W."/>
            <person name="Thorpe A."/>
            <person name="Tracey A."/>
            <person name="Tromans A."/>
            <person name="Tubby B."/>
            <person name="Wall M."/>
            <person name="Wallis J.M."/>
            <person name="West A.P."/>
            <person name="White S.S."/>
            <person name="Whitehead S.L."/>
            <person name="Whittaker H."/>
            <person name="Wild A."/>
            <person name="Willey D.J."/>
            <person name="Wilmer T.E."/>
            <person name="Wood J.M."/>
            <person name="Wray P.W."/>
            <person name="Wyatt J.C."/>
            <person name="Young L."/>
            <person name="Younger R.M."/>
            <person name="Bentley D.R."/>
            <person name="Coulson A."/>
            <person name="Durbin R.M."/>
            <person name="Hubbard T."/>
            <person name="Sulston J.E."/>
            <person name="Dunham I."/>
            <person name="Rogers J."/>
            <person name="Beck S."/>
        </authorList>
    </citation>
    <scope>NUCLEOTIDE SEQUENCE [LARGE SCALE GENOMIC DNA]</scope>
</reference>
<reference key="2">
    <citation type="journal article" date="2004" name="Genome Res.">
        <title>The status, quality, and expansion of the NIH full-length cDNA project: the Mammalian Gene Collection (MGC).</title>
        <authorList>
            <consortium name="The MGC Project Team"/>
        </authorList>
    </citation>
    <scope>NUCLEOTIDE SEQUENCE [LARGE SCALE MRNA]</scope>
    <source>
        <tissue>Skin</tissue>
    </source>
</reference>
<reference key="3">
    <citation type="unpublished observations" date="2000-02">
        <authorList>
            <person name="Keen T.J."/>
        </authorList>
    </citation>
    <scope>IDENTIFICATION</scope>
</reference>
<reference key="4">
    <citation type="journal article" date="2019" name="Cell. Mol. Life Sci.">
        <title>Tight junction proteins at the blood-brain barrier: far more than claudin-5.</title>
        <authorList>
            <person name="Berndt P."/>
            <person name="Winkler L."/>
            <person name="Cording J."/>
            <person name="Breitkreuz-Korff O."/>
            <person name="Rex A."/>
            <person name="Dithmer S."/>
            <person name="Rausch V."/>
            <person name="Blasig R."/>
            <person name="Richter M."/>
            <person name="Sporbert A."/>
            <person name="Wolburg H."/>
            <person name="Blasig I.E."/>
            <person name="Haseloff R.F."/>
        </authorList>
    </citation>
    <scope>SUBCELLULAR LOCATION</scope>
</reference>
<proteinExistence type="evidence at protein level"/>
<evidence type="ECO:0000250" key="1"/>
<evidence type="ECO:0000255" key="2"/>
<evidence type="ECO:0000256" key="3">
    <source>
        <dbReference type="SAM" id="MobiDB-lite"/>
    </source>
</evidence>
<evidence type="ECO:0000269" key="4">
    <source>
    </source>
</evidence>
<evidence type="ECO:0000305" key="5"/>
<gene>
    <name type="primary">CLDN20</name>
</gene>
<sequence>MASAGLQLLAFILALSGVSGVLTATLLPNWKVNVDVDSNIITAIVQLHGLWMDCTWYSTGMFSCALKHSILSLPIHVQAARATMVLACVLSALGICTSTVGMKCTRLGGDRETKSHASFAGGVCFMSAGISSLISTVWYTKEIIANFLDLTVPESNKHEPGGAIYIGFISAMLLFISGMIFCTSCIKRNPEARLDPPTQQPISNTQLENNSTHNLKDYV</sequence>